<protein>
    <recommendedName>
        <fullName>Charged multivesicular body protein 3</fullName>
    </recommendedName>
    <alternativeName>
        <fullName>Chromatin-modifying protein 3</fullName>
    </alternativeName>
    <alternativeName>
        <fullName>Vacuolar protein sorting-associated protein 24</fullName>
    </alternativeName>
</protein>
<organism>
    <name type="scientific">Pongo abelii</name>
    <name type="common">Sumatran orangutan</name>
    <name type="synonym">Pongo pygmaeus abelii</name>
    <dbReference type="NCBI Taxonomy" id="9601"/>
    <lineage>
        <taxon>Eukaryota</taxon>
        <taxon>Metazoa</taxon>
        <taxon>Chordata</taxon>
        <taxon>Craniata</taxon>
        <taxon>Vertebrata</taxon>
        <taxon>Euteleostomi</taxon>
        <taxon>Mammalia</taxon>
        <taxon>Eutheria</taxon>
        <taxon>Euarchontoglires</taxon>
        <taxon>Primates</taxon>
        <taxon>Haplorrhini</taxon>
        <taxon>Catarrhini</taxon>
        <taxon>Hominidae</taxon>
        <taxon>Pongo</taxon>
    </lineage>
</organism>
<gene>
    <name type="primary">CHMP3</name>
    <name type="synonym">VPS24</name>
</gene>
<sequence>MGLFGKTQEKPPKELVNEWSLKIRKEMRVVDRQIRDIQREEEKVKRSVKDAAKKGQKDVCVVLAKEMIRSRKAVSKLYASKAHMNSVLMGMKNQLAVLRVAGSLQKSTEVMKAMQSLVKIPEIQATMRELSKEMMKAGIIEEMLEDTFESMDDQEEMEEEAEMEIDRILFEITAGALGKAPSKVTDALPEPEPSGAMAASEDEEEEEEALEAMQSRLATLRS</sequence>
<accession>Q5RAU5</accession>
<reference key="1">
    <citation type="submission" date="2004-11" db="EMBL/GenBank/DDBJ databases">
        <authorList>
            <consortium name="The German cDNA consortium"/>
        </authorList>
    </citation>
    <scope>NUCLEOTIDE SEQUENCE [LARGE SCALE MRNA]</scope>
    <source>
        <tissue>Brain cortex</tissue>
    </source>
</reference>
<name>CHMP3_PONAB</name>
<comment type="function">
    <text evidence="1">Probable core component of the endosomal sorting required for transport complex III (ESCRT-III) which is involved in multivesicular bodies (MVBs) formation and sorting of endosomal cargo proteins into MVBs. MVBs contain intraluminal vesicles (ILVs) that are generated by invagination and scission from the limiting membrane of the endosome and mostly are delivered to lysosomes enabling degradation of membrane proteins, such as stimulated growth factor receptors, lysosomal enzymes and lipids. The MVB pathway appears to require the sequential function of ESCRT-O, -I,-II and -III complexes. ESCRT-III proteins mostly dissociate from the invaginating membrane before the ILV is released. The ESCRT machinery also functions in topologically equivalent membrane fission events, such as the terminal stages of cytokinesis and the budding of enveloped viruses (lentiviruses). ESCRT-III proteins are believed to mediate the necessary vesicle extrusion and/or membrane fission activities, possibly in conjunction with the AAA ATPase VPS4. Selectively binds to phosphatidylinositol 3,5-bisphosphate PtdIns(3,5)P2 and PtdIns(3,4)P2 in preference to other phosphoinositides tested. Involved in late stages of cytokinesis. Plays a role in endosomal sorting/trafficking of EGF receptor (By similarity).</text>
</comment>
<comment type="subunit">
    <text evidence="1">Probable core component of the endosomal sorting required for transport complex III (ESCRT-III). ESCRT-III components are thought to multimerize to form a flat lattice on the perimeter membrane of the endosome. Several assembly forms of ESCRT-III may exist that interact and act sequentially. Forms a metastable monomer in solution; its core structure (without part of the putative autoinhibitory C-terminal acidic region) oligomerizes into a flat lattice via two different dimerization interfaces. In vitro, heteromerizes with CHMP2A (but not CHMP4) to form helical tubular structures that expose membrane-interacting sites on the outside whereas VPS4B can associate on the inside of the tubule. May interact with IGFBP7; the relevance of such interaction however remains unclear. Interacts with CHMP2A. Interacts with CHMP4A; the interaction requires the release of CHMP4A autoinhibition. Interacts with VPS4A. Interacts with STAMBP; the interaction appears to relieve the autoinhibition of CHMP3 (By similarity). Interacts with VTA1 (By similarity).</text>
</comment>
<comment type="subcellular location">
    <subcellularLocation>
        <location evidence="1">Cytoplasm</location>
        <location evidence="1">Cytosol</location>
    </subcellularLocation>
    <subcellularLocation>
        <location evidence="1">Membrane</location>
        <topology evidence="1">Lipid-anchor</topology>
    </subcellularLocation>
    <subcellularLocation>
        <location evidence="1">Endosome</location>
    </subcellularLocation>
    <subcellularLocation>
        <location evidence="1">Late endosome membrane</location>
    </subcellularLocation>
    <text evidence="1">Localizes to the midbody of dividing cells.</text>
</comment>
<comment type="domain">
    <text>The acidic C-terminus and the basic N-termminus are thought to render the protein in a closed, soluble and inactive conformation through an autoinhibitory intramolecular interaction. The open and active conformation, which enables membrane binding and oligomerization, is achieved by interaction with other cellular binding partners, probably including other ESCRT components.</text>
</comment>
<comment type="similarity">
    <text evidence="5">Belongs to the SNF7 family.</text>
</comment>
<feature type="initiator methionine" description="Removed" evidence="3">
    <location>
        <position position="1"/>
    </location>
</feature>
<feature type="chain" id="PRO_0000211482" description="Charged multivesicular body protein 3">
    <location>
        <begin position="2"/>
        <end position="222"/>
    </location>
</feature>
<feature type="region of interest" description="Intramolecular interaction with C-terminus" evidence="1">
    <location>
        <begin position="2"/>
        <end position="113"/>
    </location>
</feature>
<feature type="region of interest" description="Important for autoinhibitory function" evidence="1">
    <location>
        <begin position="59"/>
        <end position="64"/>
    </location>
</feature>
<feature type="region of interest" description="Interaction with VPS4A" evidence="1">
    <location>
        <begin position="151"/>
        <end position="222"/>
    </location>
</feature>
<feature type="region of interest" description="Intramolecular interaction with N-terminus" evidence="1">
    <location>
        <begin position="151"/>
        <end position="220"/>
    </location>
</feature>
<feature type="region of interest" description="Important for autoinhibitory function" evidence="1">
    <location>
        <begin position="168"/>
        <end position="169"/>
    </location>
</feature>
<feature type="region of interest" description="Disordered" evidence="4">
    <location>
        <begin position="180"/>
        <end position="222"/>
    </location>
</feature>
<feature type="region of interest" description="Interaction with STAMBP" evidence="1">
    <location>
        <begin position="196"/>
        <end position="222"/>
    </location>
</feature>
<feature type="region of interest" description="Interaction with STAMBP" evidence="1">
    <location>
        <begin position="203"/>
        <end position="207"/>
    </location>
</feature>
<feature type="region of interest" description="Interaction with STAMBP" evidence="1">
    <location>
        <begin position="221"/>
        <end position="222"/>
    </location>
</feature>
<feature type="coiled-coil region" evidence="3">
    <location>
        <begin position="22"/>
        <end position="54"/>
    </location>
</feature>
<feature type="coiled-coil region" evidence="3">
    <location>
        <begin position="141"/>
        <end position="222"/>
    </location>
</feature>
<feature type="short sequence motif" description="MIT-interacting motif" evidence="1">
    <location>
        <begin position="201"/>
        <end position="211"/>
    </location>
</feature>
<feature type="compositionally biased region" description="Acidic residues" evidence="4">
    <location>
        <begin position="200"/>
        <end position="210"/>
    </location>
</feature>
<feature type="site" description="Important for autoinhibitory function" evidence="1">
    <location>
        <position position="48"/>
    </location>
</feature>
<feature type="site" description="Interaction with STAMBP" evidence="1">
    <location>
        <position position="216"/>
    </location>
</feature>
<feature type="modified residue" description="Phosphoserine" evidence="2">
    <location>
        <position position="200"/>
    </location>
</feature>
<feature type="lipid moiety-binding region" description="N-myristoyl glycine" evidence="3">
    <location>
        <position position="2"/>
    </location>
</feature>
<feature type="cross-link" description="Glycyl lysine isopeptide (Lys-Gly) (interchain with G-Cter in ubiquitin)" evidence="2">
    <location>
        <position position="179"/>
    </location>
</feature>
<evidence type="ECO:0000250" key="1"/>
<evidence type="ECO:0000250" key="2">
    <source>
        <dbReference type="UniProtKB" id="Q9Y3E7"/>
    </source>
</evidence>
<evidence type="ECO:0000255" key="3"/>
<evidence type="ECO:0000256" key="4">
    <source>
        <dbReference type="SAM" id="MobiDB-lite"/>
    </source>
</evidence>
<evidence type="ECO:0000305" key="5"/>
<proteinExistence type="evidence at transcript level"/>
<dbReference type="EMBL" id="CR858917">
    <property type="protein sequence ID" value="CAH91115.1"/>
    <property type="molecule type" value="mRNA"/>
</dbReference>
<dbReference type="RefSeq" id="NP_001125653.1">
    <property type="nucleotide sequence ID" value="NM_001132181.1"/>
</dbReference>
<dbReference type="SMR" id="Q5RAU5"/>
<dbReference type="FunCoup" id="Q5RAU5">
    <property type="interactions" value="2349"/>
</dbReference>
<dbReference type="STRING" id="9601.ENSPPYP00000013615"/>
<dbReference type="GeneID" id="100172572"/>
<dbReference type="KEGG" id="pon:100172572"/>
<dbReference type="CTD" id="51652"/>
<dbReference type="eggNOG" id="KOG3229">
    <property type="taxonomic scope" value="Eukaryota"/>
</dbReference>
<dbReference type="HOGENOM" id="CLU_069208_0_1_1"/>
<dbReference type="InParanoid" id="Q5RAU5"/>
<dbReference type="OrthoDB" id="2329734at2759"/>
<dbReference type="TreeFam" id="TF105848"/>
<dbReference type="Proteomes" id="UP000001595">
    <property type="component" value="Unplaced"/>
</dbReference>
<dbReference type="GO" id="GO:1904930">
    <property type="term" value="C:amphisome membrane"/>
    <property type="evidence" value="ECO:0007669"/>
    <property type="project" value="UniProtKB-ARBA"/>
</dbReference>
<dbReference type="GO" id="GO:0005829">
    <property type="term" value="C:cytosol"/>
    <property type="evidence" value="ECO:0007669"/>
    <property type="project" value="UniProtKB-SubCell"/>
</dbReference>
<dbReference type="GO" id="GO:0000776">
    <property type="term" value="C:kinetochore"/>
    <property type="evidence" value="ECO:0007669"/>
    <property type="project" value="UniProtKB-ARBA"/>
</dbReference>
<dbReference type="GO" id="GO:0005828">
    <property type="term" value="C:kinetochore microtubule"/>
    <property type="evidence" value="ECO:0007669"/>
    <property type="project" value="UniProtKB-ARBA"/>
</dbReference>
<dbReference type="GO" id="GO:0005765">
    <property type="term" value="C:lysosomal membrane"/>
    <property type="evidence" value="ECO:0007669"/>
    <property type="project" value="UniProtKB-ARBA"/>
</dbReference>
<dbReference type="GO" id="GO:0030496">
    <property type="term" value="C:midbody"/>
    <property type="evidence" value="ECO:0007669"/>
    <property type="project" value="UniProtKB-ARBA"/>
</dbReference>
<dbReference type="GO" id="GO:0032585">
    <property type="term" value="C:multivesicular body membrane"/>
    <property type="evidence" value="ECO:0007669"/>
    <property type="project" value="UniProtKB-ARBA"/>
</dbReference>
<dbReference type="GO" id="GO:0005643">
    <property type="term" value="C:nuclear pore"/>
    <property type="evidence" value="ECO:0007669"/>
    <property type="project" value="UniProtKB-ARBA"/>
</dbReference>
<dbReference type="GO" id="GO:0097352">
    <property type="term" value="P:autophagosome maturation"/>
    <property type="evidence" value="ECO:0007669"/>
    <property type="project" value="UniProtKB-ARBA"/>
</dbReference>
<dbReference type="GO" id="GO:1902774">
    <property type="term" value="P:late endosome to lysosome transport"/>
    <property type="evidence" value="ECO:0007669"/>
    <property type="project" value="UniProtKB-ARBA"/>
</dbReference>
<dbReference type="GO" id="GO:0061952">
    <property type="term" value="P:midbody abscission"/>
    <property type="evidence" value="ECO:0007669"/>
    <property type="project" value="UniProtKB-ARBA"/>
</dbReference>
<dbReference type="GO" id="GO:0007080">
    <property type="term" value="P:mitotic metaphase chromosome alignment"/>
    <property type="evidence" value="ECO:0007669"/>
    <property type="project" value="UniProtKB-ARBA"/>
</dbReference>
<dbReference type="GO" id="GO:0071985">
    <property type="term" value="P:multivesicular body sorting pathway"/>
    <property type="evidence" value="ECO:0007669"/>
    <property type="project" value="UniProtKB-ARBA"/>
</dbReference>
<dbReference type="GO" id="GO:0031468">
    <property type="term" value="P:nuclear membrane reassembly"/>
    <property type="evidence" value="ECO:0007669"/>
    <property type="project" value="UniProtKB-ARBA"/>
</dbReference>
<dbReference type="GO" id="GO:0001778">
    <property type="term" value="P:plasma membrane repair"/>
    <property type="evidence" value="ECO:0007669"/>
    <property type="project" value="UniProtKB-ARBA"/>
</dbReference>
<dbReference type="GO" id="GO:0015031">
    <property type="term" value="P:protein transport"/>
    <property type="evidence" value="ECO:0007669"/>
    <property type="project" value="UniProtKB-KW"/>
</dbReference>
<dbReference type="GO" id="GO:1901673">
    <property type="term" value="P:regulation of mitotic spindle assembly"/>
    <property type="evidence" value="ECO:0007669"/>
    <property type="project" value="UniProtKB-ARBA"/>
</dbReference>
<dbReference type="GO" id="GO:0043162">
    <property type="term" value="P:ubiquitin-dependent protein catabolic process via the multivesicular body sorting pathway"/>
    <property type="evidence" value="ECO:0007669"/>
    <property type="project" value="UniProtKB-ARBA"/>
</dbReference>
<dbReference type="GO" id="GO:0046761">
    <property type="term" value="P:viral budding from plasma membrane"/>
    <property type="evidence" value="ECO:0007669"/>
    <property type="project" value="UniProtKB-ARBA"/>
</dbReference>
<dbReference type="GO" id="GO:0039702">
    <property type="term" value="P:viral budding via host ESCRT complex"/>
    <property type="evidence" value="ECO:0007669"/>
    <property type="project" value="UniProtKB-ARBA"/>
</dbReference>
<dbReference type="Gene3D" id="6.10.140.1230">
    <property type="match status" value="1"/>
</dbReference>
<dbReference type="InterPro" id="IPR005024">
    <property type="entry name" value="Snf7_fam"/>
</dbReference>
<dbReference type="PANTHER" id="PTHR10476">
    <property type="entry name" value="CHARGED MULTIVESICULAR BODY PROTEIN"/>
    <property type="match status" value="1"/>
</dbReference>
<dbReference type="Pfam" id="PF03357">
    <property type="entry name" value="Snf7"/>
    <property type="match status" value="1"/>
</dbReference>
<keyword id="KW-0131">Cell cycle</keyword>
<keyword id="KW-0132">Cell division</keyword>
<keyword id="KW-0175">Coiled coil</keyword>
<keyword id="KW-0963">Cytoplasm</keyword>
<keyword id="KW-0967">Endosome</keyword>
<keyword id="KW-1017">Isopeptide bond</keyword>
<keyword id="KW-0449">Lipoprotein</keyword>
<keyword id="KW-0472">Membrane</keyword>
<keyword id="KW-0519">Myristate</keyword>
<keyword id="KW-0597">Phosphoprotein</keyword>
<keyword id="KW-0653">Protein transport</keyword>
<keyword id="KW-1185">Reference proteome</keyword>
<keyword id="KW-0813">Transport</keyword>
<keyword id="KW-0832">Ubl conjugation</keyword>